<gene>
    <name evidence="1" type="primary">mltF</name>
    <name type="ordered locus">VC_0866</name>
</gene>
<evidence type="ECO:0000255" key="1">
    <source>
        <dbReference type="HAMAP-Rule" id="MF_02016"/>
    </source>
</evidence>
<evidence type="ECO:0000256" key="2">
    <source>
        <dbReference type="SAM" id="MobiDB-lite"/>
    </source>
</evidence>
<keyword id="KW-0998">Cell outer membrane</keyword>
<keyword id="KW-0961">Cell wall biogenesis/degradation</keyword>
<keyword id="KW-0456">Lyase</keyword>
<keyword id="KW-0472">Membrane</keyword>
<keyword id="KW-1185">Reference proteome</keyword>
<keyword id="KW-0732">Signal</keyword>
<reference key="1">
    <citation type="journal article" date="2000" name="Nature">
        <title>DNA sequence of both chromosomes of the cholera pathogen Vibrio cholerae.</title>
        <authorList>
            <person name="Heidelberg J.F."/>
            <person name="Eisen J.A."/>
            <person name="Nelson W.C."/>
            <person name="Clayton R.A."/>
            <person name="Gwinn M.L."/>
            <person name="Dodson R.J."/>
            <person name="Haft D.H."/>
            <person name="Hickey E.K."/>
            <person name="Peterson J.D."/>
            <person name="Umayam L.A."/>
            <person name="Gill S.R."/>
            <person name="Nelson K.E."/>
            <person name="Read T.D."/>
            <person name="Tettelin H."/>
            <person name="Richardson D.L."/>
            <person name="Ermolaeva M.D."/>
            <person name="Vamathevan J.J."/>
            <person name="Bass S."/>
            <person name="Qin H."/>
            <person name="Dragoi I."/>
            <person name="Sellers P."/>
            <person name="McDonald L.A."/>
            <person name="Utterback T.R."/>
            <person name="Fleischmann R.D."/>
            <person name="Nierman W.C."/>
            <person name="White O."/>
            <person name="Salzberg S.L."/>
            <person name="Smith H.O."/>
            <person name="Colwell R.R."/>
            <person name="Mekalanos J.J."/>
            <person name="Venter J.C."/>
            <person name="Fraser C.M."/>
        </authorList>
    </citation>
    <scope>NUCLEOTIDE SEQUENCE [LARGE SCALE GENOMIC DNA]</scope>
    <source>
        <strain>ATCC 39315 / El Tor Inaba N16961</strain>
    </source>
</reference>
<name>MLTF_VIBCH</name>
<dbReference type="EC" id="4.2.2.n1" evidence="1"/>
<dbReference type="EMBL" id="AE003852">
    <property type="protein sequence ID" value="AAF94028.1"/>
    <property type="molecule type" value="Genomic_DNA"/>
</dbReference>
<dbReference type="PIR" id="F82271">
    <property type="entry name" value="F82271"/>
</dbReference>
<dbReference type="RefSeq" id="NP_230513.1">
    <property type="nucleotide sequence ID" value="NC_002505.1"/>
</dbReference>
<dbReference type="RefSeq" id="WP_000187388.1">
    <property type="nucleotide sequence ID" value="NZ_LT906614.1"/>
</dbReference>
<dbReference type="SMR" id="Q9KTN5"/>
<dbReference type="STRING" id="243277.VC_0866"/>
<dbReference type="CAZy" id="GH23">
    <property type="family name" value="Glycoside Hydrolase Family 23"/>
</dbReference>
<dbReference type="DNASU" id="2614533"/>
<dbReference type="EnsemblBacteria" id="AAF94028">
    <property type="protein sequence ID" value="AAF94028"/>
    <property type="gene ID" value="VC_0866"/>
</dbReference>
<dbReference type="GeneID" id="69720421"/>
<dbReference type="KEGG" id="vch:VC_0866"/>
<dbReference type="PATRIC" id="fig|243277.26.peg.826"/>
<dbReference type="eggNOG" id="COG4623">
    <property type="taxonomic scope" value="Bacteria"/>
</dbReference>
<dbReference type="HOGENOM" id="CLU_027494_0_1_6"/>
<dbReference type="Proteomes" id="UP000000584">
    <property type="component" value="Chromosome 1"/>
</dbReference>
<dbReference type="GO" id="GO:0009279">
    <property type="term" value="C:cell outer membrane"/>
    <property type="evidence" value="ECO:0000318"/>
    <property type="project" value="GO_Central"/>
</dbReference>
<dbReference type="GO" id="GO:0008933">
    <property type="term" value="F:peptidoglycan lytic transglycosylase activity"/>
    <property type="evidence" value="ECO:0000318"/>
    <property type="project" value="GO_Central"/>
</dbReference>
<dbReference type="GO" id="GO:0016998">
    <property type="term" value="P:cell wall macromolecule catabolic process"/>
    <property type="evidence" value="ECO:0007669"/>
    <property type="project" value="UniProtKB-UniRule"/>
</dbReference>
<dbReference type="GO" id="GO:0071555">
    <property type="term" value="P:cell wall organization"/>
    <property type="evidence" value="ECO:0007669"/>
    <property type="project" value="UniProtKB-KW"/>
</dbReference>
<dbReference type="GO" id="GO:0009253">
    <property type="term" value="P:peptidoglycan catabolic process"/>
    <property type="evidence" value="ECO:0000318"/>
    <property type="project" value="GO_Central"/>
</dbReference>
<dbReference type="CDD" id="cd13403">
    <property type="entry name" value="MLTF-like"/>
    <property type="match status" value="1"/>
</dbReference>
<dbReference type="CDD" id="cd01009">
    <property type="entry name" value="PBP2_YfhD_N"/>
    <property type="match status" value="1"/>
</dbReference>
<dbReference type="FunFam" id="1.10.530.10:FF:000003">
    <property type="entry name" value="Membrane-bound lytic murein transglycosylase F"/>
    <property type="match status" value="1"/>
</dbReference>
<dbReference type="FunFam" id="3.40.190.10:FF:000373">
    <property type="entry name" value="Membrane-bound lytic murein transglycosylase F"/>
    <property type="match status" value="1"/>
</dbReference>
<dbReference type="Gene3D" id="1.10.530.10">
    <property type="match status" value="1"/>
</dbReference>
<dbReference type="Gene3D" id="3.40.190.10">
    <property type="entry name" value="Periplasmic binding protein-like II"/>
    <property type="match status" value="2"/>
</dbReference>
<dbReference type="HAMAP" id="MF_02016">
    <property type="entry name" value="MltF"/>
    <property type="match status" value="1"/>
</dbReference>
<dbReference type="InterPro" id="IPR023346">
    <property type="entry name" value="Lysozyme-like_dom_sf"/>
</dbReference>
<dbReference type="InterPro" id="IPR023703">
    <property type="entry name" value="MltF"/>
</dbReference>
<dbReference type="InterPro" id="IPR001638">
    <property type="entry name" value="Solute-binding_3/MltF_N"/>
</dbReference>
<dbReference type="InterPro" id="IPR000189">
    <property type="entry name" value="Transglyc_AS"/>
</dbReference>
<dbReference type="InterPro" id="IPR008258">
    <property type="entry name" value="Transglycosylase_SLT_dom_1"/>
</dbReference>
<dbReference type="NCBIfam" id="NF008112">
    <property type="entry name" value="PRK10859.1"/>
    <property type="match status" value="1"/>
</dbReference>
<dbReference type="PANTHER" id="PTHR35936">
    <property type="entry name" value="MEMBRANE-BOUND LYTIC MUREIN TRANSGLYCOSYLASE F"/>
    <property type="match status" value="1"/>
</dbReference>
<dbReference type="PANTHER" id="PTHR35936:SF32">
    <property type="entry name" value="MEMBRANE-BOUND LYTIC MUREIN TRANSGLYCOSYLASE F"/>
    <property type="match status" value="1"/>
</dbReference>
<dbReference type="Pfam" id="PF00497">
    <property type="entry name" value="SBP_bac_3"/>
    <property type="match status" value="1"/>
</dbReference>
<dbReference type="Pfam" id="PF01464">
    <property type="entry name" value="SLT"/>
    <property type="match status" value="1"/>
</dbReference>
<dbReference type="SMART" id="SM00062">
    <property type="entry name" value="PBPb"/>
    <property type="match status" value="1"/>
</dbReference>
<dbReference type="SUPFAM" id="SSF53955">
    <property type="entry name" value="Lysozyme-like"/>
    <property type="match status" value="1"/>
</dbReference>
<dbReference type="SUPFAM" id="SSF53850">
    <property type="entry name" value="Periplasmic binding protein-like II"/>
    <property type="match status" value="1"/>
</dbReference>
<dbReference type="PROSITE" id="PS51257">
    <property type="entry name" value="PROKAR_LIPOPROTEIN"/>
    <property type="match status" value="1"/>
</dbReference>
<dbReference type="PROSITE" id="PS00922">
    <property type="entry name" value="TRANSGLYCOSYLASE"/>
    <property type="match status" value="1"/>
</dbReference>
<feature type="signal peptide" evidence="1">
    <location>
        <begin position="1"/>
        <end position="27"/>
    </location>
</feature>
<feature type="chain" id="PRO_0000353990" description="Membrane-bound lytic murein transglycosylase F">
    <location>
        <begin position="28"/>
        <end position="530"/>
    </location>
</feature>
<feature type="region of interest" description="Non-LT domain" evidence="1">
    <location>
        <begin position="28"/>
        <end position="279"/>
    </location>
</feature>
<feature type="region of interest" description="LT domain" evidence="1">
    <location>
        <begin position="280"/>
        <end position="530"/>
    </location>
</feature>
<feature type="region of interest" description="Disordered" evidence="2">
    <location>
        <begin position="505"/>
        <end position="530"/>
    </location>
</feature>
<feature type="compositionally biased region" description="Low complexity" evidence="2">
    <location>
        <begin position="513"/>
        <end position="530"/>
    </location>
</feature>
<feature type="active site" evidence="1">
    <location>
        <position position="324"/>
    </location>
</feature>
<proteinExistence type="inferred from homology"/>
<protein>
    <recommendedName>
        <fullName evidence="1">Membrane-bound lytic murein transglycosylase F</fullName>
        <ecNumber evidence="1">4.2.2.n1</ecNumber>
    </recommendedName>
    <alternativeName>
        <fullName evidence="1">Murein lyase F</fullName>
    </alternativeName>
</protein>
<sequence length="530" mass="60767">MTPFAYKLPIRALWLGLLSLLLVGCQIDSEPKSELEKIRERGVLRVGTLNNPLSYYIGPDGPTGLDYELAREFAKELGVKLEMKPAYRLSSLFPALKNGEVDIIAAGLSQSEERLKDFRAGPAYYYVSQQVVYKKGDWRPRSFKQLVERQQTLLKDNPELAFFSVVDDSHFEHTLLAKQQKYPDFQFHVDSNSDVNDLLKKVSQGELLFTMADSVEVSLSQRIYPELAAAFELTEDQPISWFIRRSDDESLYALMIEFFGNLKQSGYLASLEEKYIGHIGAFDYVDTRAFIRALDTRLPRWTPLFQKYSAEFDWRLVAALAYQESHWNPYAKSPTGVRGLMMLTLPTARSVGVSDRLDPEQSIRGGVEYLRRMMERVPDSISEHEKIWFALASYNIGYGHMMDARRLTKSQGADPDSWADVKDRLPQLQQKKYFTQTRYGYARGDEARNYVENIRRYYQSIIGHLEQRQLATGDESIEDLTVIALDEEFFNEEANREILDEEAEALESESLENSESSAEPSAKPSTESKN</sequence>
<accession>Q9KTN5</accession>
<organism>
    <name type="scientific">Vibrio cholerae serotype O1 (strain ATCC 39315 / El Tor Inaba N16961)</name>
    <dbReference type="NCBI Taxonomy" id="243277"/>
    <lineage>
        <taxon>Bacteria</taxon>
        <taxon>Pseudomonadati</taxon>
        <taxon>Pseudomonadota</taxon>
        <taxon>Gammaproteobacteria</taxon>
        <taxon>Vibrionales</taxon>
        <taxon>Vibrionaceae</taxon>
        <taxon>Vibrio</taxon>
    </lineage>
</organism>
<comment type="function">
    <text evidence="1">Murein-degrading enzyme that degrades murein glycan strands and insoluble, high-molecular weight murein sacculi, with the concomitant formation of a 1,6-anhydromuramoyl product. Lytic transglycosylases (LTs) play an integral role in the metabolism of the peptidoglycan (PG) sacculus. Their lytic action creates space within the PG sacculus to allow for its expansion as well as for the insertion of various structures such as secretion systems and flagella.</text>
</comment>
<comment type="catalytic activity">
    <reaction evidence="1">
        <text>Exolytic cleavage of the (1-&gt;4)-beta-glycosidic linkage between N-acetylmuramic acid (MurNAc) and N-acetylglucosamine (GlcNAc) residues in peptidoglycan, from either the reducing or the non-reducing ends of the peptidoglycan chains, with concomitant formation of a 1,6-anhydrobond in the MurNAc residue.</text>
        <dbReference type="EC" id="4.2.2.n1"/>
    </reaction>
</comment>
<comment type="subcellular location">
    <subcellularLocation>
        <location>Cell outer membrane</location>
        <topology>Peripheral membrane protein</topology>
    </subcellularLocation>
    <text evidence="1">Attached to the inner leaflet of the outer membrane.</text>
</comment>
<comment type="domain">
    <text evidence="1">The N-terminal domain does not have lytic activity and probably modulates enzymatic activity. The C-terminal domain is the catalytic active domain.</text>
</comment>
<comment type="similarity">
    <text evidence="1">In the N-terminal section; belongs to the bacterial solute-binding protein 3 family.</text>
</comment>
<comment type="similarity">
    <text evidence="1">In the C-terminal section; belongs to the transglycosylase Slt family.</text>
</comment>